<reference key="1">
    <citation type="submission" date="2006-07" db="EMBL/GenBank/DDBJ databases">
        <title>Analysis of a phylogenetically conserved oligodendrocyte-enhancer in a mammalian gene, Opalin.</title>
        <authorList>
            <person name="Aruga J."/>
            <person name="Toyoda A."/>
            <person name="Yoshikawa F."/>
            <person name="Nozaki Y."/>
            <person name="Sakaki Y."/>
            <person name="Furuichi T."/>
        </authorList>
    </citation>
    <scope>NUCLEOTIDE SEQUENCE [GENOMIC DNA]</scope>
</reference>
<proteinExistence type="inferred from homology"/>
<dbReference type="EC" id="2.7.7.31"/>
<dbReference type="EMBL" id="AB265806">
    <property type="protein sequence ID" value="BAF51669.1"/>
    <property type="molecule type" value="Genomic_DNA"/>
</dbReference>
<dbReference type="SMR" id="A4PCD4"/>
<dbReference type="GO" id="GO:0005634">
    <property type="term" value="C:nucleus"/>
    <property type="evidence" value="ECO:0000250"/>
    <property type="project" value="UniProtKB"/>
</dbReference>
<dbReference type="GO" id="GO:0003677">
    <property type="term" value="F:DNA binding"/>
    <property type="evidence" value="ECO:0007669"/>
    <property type="project" value="InterPro"/>
</dbReference>
<dbReference type="GO" id="GO:0003912">
    <property type="term" value="F:DNA nucleotidylexotransferase activity"/>
    <property type="evidence" value="ECO:0000250"/>
    <property type="project" value="UniProtKB"/>
</dbReference>
<dbReference type="GO" id="GO:0003887">
    <property type="term" value="F:DNA-directed DNA polymerase activity"/>
    <property type="evidence" value="ECO:0007669"/>
    <property type="project" value="InterPro"/>
</dbReference>
<dbReference type="GO" id="GO:0046872">
    <property type="term" value="F:metal ion binding"/>
    <property type="evidence" value="ECO:0007669"/>
    <property type="project" value="UniProtKB-KW"/>
</dbReference>
<dbReference type="GO" id="GO:0006259">
    <property type="term" value="P:DNA metabolic process"/>
    <property type="evidence" value="ECO:0000250"/>
    <property type="project" value="UniProtKB"/>
</dbReference>
<dbReference type="GO" id="GO:0006304">
    <property type="term" value="P:DNA modification"/>
    <property type="evidence" value="ECO:0007669"/>
    <property type="project" value="UniProtKB-KW"/>
</dbReference>
<dbReference type="GO" id="GO:0006303">
    <property type="term" value="P:double-strand break repair via nonhomologous end joining"/>
    <property type="evidence" value="ECO:0007669"/>
    <property type="project" value="TreeGrafter"/>
</dbReference>
<dbReference type="CDD" id="cd00141">
    <property type="entry name" value="NT_POLXc"/>
    <property type="match status" value="1"/>
</dbReference>
<dbReference type="FunFam" id="3.30.210.10:FF:000003">
    <property type="entry name" value="DNA nucleotidylexotransferase"/>
    <property type="match status" value="1"/>
</dbReference>
<dbReference type="FunFam" id="3.30.460.10:FF:000028">
    <property type="entry name" value="DNA nucleotidylexotransferase"/>
    <property type="match status" value="1"/>
</dbReference>
<dbReference type="FunFam" id="3.40.50.10190:FF:000041">
    <property type="entry name" value="DNA nucleotidylexotransferase"/>
    <property type="match status" value="1"/>
</dbReference>
<dbReference type="FunFam" id="1.10.150.20:FF:000010">
    <property type="entry name" value="DNA polymerase lambda"/>
    <property type="match status" value="1"/>
</dbReference>
<dbReference type="FunFam" id="1.10.150.110:FF:000003">
    <property type="entry name" value="DNA polymerase mu"/>
    <property type="match status" value="1"/>
</dbReference>
<dbReference type="Gene3D" id="1.10.150.20">
    <property type="entry name" value="5' to 3' exonuclease, C-terminal subdomain"/>
    <property type="match status" value="1"/>
</dbReference>
<dbReference type="Gene3D" id="3.30.460.10">
    <property type="entry name" value="Beta Polymerase, domain 2"/>
    <property type="match status" value="1"/>
</dbReference>
<dbReference type="Gene3D" id="3.40.50.10190">
    <property type="entry name" value="BRCT domain"/>
    <property type="match status" value="1"/>
</dbReference>
<dbReference type="Gene3D" id="1.10.150.110">
    <property type="entry name" value="DNA polymerase beta, N-terminal domain-like"/>
    <property type="match status" value="1"/>
</dbReference>
<dbReference type="Gene3D" id="3.30.210.10">
    <property type="entry name" value="DNA polymerase, thumb domain"/>
    <property type="match status" value="1"/>
</dbReference>
<dbReference type="InterPro" id="IPR001357">
    <property type="entry name" value="BRCT_dom"/>
</dbReference>
<dbReference type="InterPro" id="IPR036420">
    <property type="entry name" value="BRCT_dom_sf"/>
</dbReference>
<dbReference type="InterPro" id="IPR002054">
    <property type="entry name" value="DNA-dir_DNA_pol_X"/>
</dbReference>
<dbReference type="InterPro" id="IPR019843">
    <property type="entry name" value="DNA_pol-X_BS"/>
</dbReference>
<dbReference type="InterPro" id="IPR018944">
    <property type="entry name" value="DNA_pol_lambd_fingers_domain"/>
</dbReference>
<dbReference type="InterPro" id="IPR027421">
    <property type="entry name" value="DNA_pol_lamdba_lyase_dom_sf"/>
</dbReference>
<dbReference type="InterPro" id="IPR037160">
    <property type="entry name" value="DNA_Pol_thumb_sf"/>
</dbReference>
<dbReference type="InterPro" id="IPR022312">
    <property type="entry name" value="DNA_pol_X"/>
</dbReference>
<dbReference type="InterPro" id="IPR043519">
    <property type="entry name" value="NT_sf"/>
</dbReference>
<dbReference type="InterPro" id="IPR029398">
    <property type="entry name" value="PolB_thumb"/>
</dbReference>
<dbReference type="InterPro" id="IPR002934">
    <property type="entry name" value="Polymerase_NTP_transf_dom"/>
</dbReference>
<dbReference type="InterPro" id="IPR027292">
    <property type="entry name" value="TdT"/>
</dbReference>
<dbReference type="InterPro" id="IPR001726">
    <property type="entry name" value="TdT/Mu"/>
</dbReference>
<dbReference type="PANTHER" id="PTHR11276:SF21">
    <property type="entry name" value="DNA NUCLEOTIDYLEXOTRANSFERASE"/>
    <property type="match status" value="1"/>
</dbReference>
<dbReference type="PANTHER" id="PTHR11276">
    <property type="entry name" value="DNA POLYMERASE TYPE-X FAMILY MEMBER"/>
    <property type="match status" value="1"/>
</dbReference>
<dbReference type="Pfam" id="PF00533">
    <property type="entry name" value="BRCT"/>
    <property type="match status" value="1"/>
</dbReference>
<dbReference type="Pfam" id="PF14791">
    <property type="entry name" value="DNA_pol_B_thumb"/>
    <property type="match status" value="1"/>
</dbReference>
<dbReference type="Pfam" id="PF10391">
    <property type="entry name" value="DNA_pol_lambd_f"/>
    <property type="match status" value="1"/>
</dbReference>
<dbReference type="Pfam" id="PF01909">
    <property type="entry name" value="NTP_transf_2"/>
    <property type="match status" value="1"/>
</dbReference>
<dbReference type="PIRSF" id="PIRSF000817">
    <property type="entry name" value="DNA_NT"/>
    <property type="match status" value="1"/>
</dbReference>
<dbReference type="PIRSF" id="PIRSF501175">
    <property type="entry name" value="TDT"/>
    <property type="match status" value="1"/>
</dbReference>
<dbReference type="PRINTS" id="PR00869">
    <property type="entry name" value="DNAPOLX"/>
</dbReference>
<dbReference type="PRINTS" id="PR00871">
    <property type="entry name" value="DNAPOLXTDT"/>
</dbReference>
<dbReference type="SMART" id="SM00292">
    <property type="entry name" value="BRCT"/>
    <property type="match status" value="1"/>
</dbReference>
<dbReference type="SMART" id="SM00483">
    <property type="entry name" value="POLXc"/>
    <property type="match status" value="1"/>
</dbReference>
<dbReference type="SUPFAM" id="SSF52113">
    <property type="entry name" value="BRCT domain"/>
    <property type="match status" value="1"/>
</dbReference>
<dbReference type="SUPFAM" id="SSF47802">
    <property type="entry name" value="DNA polymerase beta, N-terminal domain-like"/>
    <property type="match status" value="1"/>
</dbReference>
<dbReference type="SUPFAM" id="SSF81301">
    <property type="entry name" value="Nucleotidyltransferase"/>
    <property type="match status" value="1"/>
</dbReference>
<dbReference type="SUPFAM" id="SSF81585">
    <property type="entry name" value="PsbU/PolX domain-like"/>
    <property type="match status" value="1"/>
</dbReference>
<dbReference type="PROSITE" id="PS50172">
    <property type="entry name" value="BRCT"/>
    <property type="match status" value="1"/>
</dbReference>
<dbReference type="PROSITE" id="PS00522">
    <property type="entry name" value="DNA_POLYMERASE_X"/>
    <property type="match status" value="1"/>
</dbReference>
<sequence>MDPLQTAHAGPRKKRPRQTGASMASTPQDVRFQDLVLFILEKKMGSTRRTFLTELARRKGFRVENEFSDSVTHIVAENNSGSDVLEWLQVQKIKASSQLEVLDVSWLIECMRTGKPVETTGKHQLVARSDCSASPNPGPQKTPPLAVQKISQYACQRRTTLNNCNHVFTDAFEILAENYEFKENEGCAVTFLRAASVLKSLPFTIITMRDTEGIPCLEDKVKCIIEEIIEDGESSEVKAVLNDERYQSFKLFTSVFGVGLKTSEKWFRMGFRTLSKIRSDKSLTFTRMQRAGFHYYEDLVSCVTRAEAEAVSVLVKEAVWAFLPDAFVTMTGGFRRGKKIGHDVDFLITSPGSTEEEEEQLLHKVMNLWEKKGLLLYCDLVESTFEKLKLPSRKVDALDHFQKCFLILKLHHQRVVDSQKSSQQDGKTWKAIRVDLVMCPYERRAFALLGWTGSRQFERDLRRYATHERRMMLDNHGLWDKTKRIFLKAESEEEIFAHLGLDYIEPSERNA</sequence>
<accession>A4PCD4</accession>
<name>TDT_EULMA</name>
<comment type="function">
    <text evidence="3">Template-independent DNA polymerase which catalyzes the random addition of deoxynucleoside 5'-triphosphate to the 3'-end of a DNA initiator. One of the in vivo functions of this enzyme is the addition of nucleotides at the junction (N region) of rearranged Ig heavy chain and T-cell receptor gene segments during the maturation of B- and T-cells.</text>
</comment>
<comment type="catalytic activity">
    <reaction evidence="3">
        <text>DNA(n) + a 2'-deoxyribonucleoside 5'-triphosphate = DNA(n+1) + diphosphate</text>
        <dbReference type="Rhea" id="RHEA:22508"/>
        <dbReference type="Rhea" id="RHEA-COMP:17339"/>
        <dbReference type="Rhea" id="RHEA-COMP:17340"/>
        <dbReference type="ChEBI" id="CHEBI:33019"/>
        <dbReference type="ChEBI" id="CHEBI:61560"/>
        <dbReference type="ChEBI" id="CHEBI:173112"/>
        <dbReference type="EC" id="2.7.7.31"/>
    </reaction>
</comment>
<comment type="cofactor">
    <cofactor evidence="3">
        <name>Mg(2+)</name>
        <dbReference type="ChEBI" id="CHEBI:18420"/>
    </cofactor>
    <text evidence="3">Can also utilize other divalent cations, such as Mn(2+) and Co(2+) (in vitro).</text>
</comment>
<comment type="subunit">
    <text evidence="1">Interacts with PRP19 and DNTTIP1. Forms a ternary complex with DNTTIP2 and core histone. Released from this complex by PCNA. Interacts with TRERF1.</text>
</comment>
<comment type="subcellular location">
    <subcellularLocation>
        <location evidence="1">Nucleus</location>
    </subcellularLocation>
</comment>
<comment type="similarity">
    <text evidence="6">Belongs to the DNA polymerase type-X family.</text>
</comment>
<feature type="chain" id="PRO_0000288558" description="DNA nucleotidylexotransferase">
    <location>
        <begin position="1"/>
        <end position="511"/>
    </location>
</feature>
<feature type="domain" description="BRCT" evidence="4">
    <location>
        <begin position="27"/>
        <end position="124"/>
    </location>
</feature>
<feature type="region of interest" description="Disordered" evidence="5">
    <location>
        <begin position="1"/>
        <end position="26"/>
    </location>
</feature>
<feature type="region of interest" description="Mediates interaction with DNTTIP2" evidence="1">
    <location>
        <begin position="151"/>
        <end position="511"/>
    </location>
</feature>
<feature type="region of interest" description="Involved in DNA binding" evidence="3">
    <location>
        <begin position="258"/>
        <end position="262"/>
    </location>
</feature>
<feature type="short sequence motif" description="Nuclear localization signal" evidence="2">
    <location>
        <begin position="11"/>
        <end position="17"/>
    </location>
</feature>
<feature type="binding site" evidence="3">
    <location>
        <begin position="333"/>
        <end position="338"/>
    </location>
    <ligand>
        <name>a 2'-deoxyribonucleoside 5'-triphosphate</name>
        <dbReference type="ChEBI" id="CHEBI:61560"/>
    </ligand>
</feature>
<feature type="binding site" evidence="3">
    <location>
        <begin position="342"/>
        <end position="345"/>
    </location>
    <ligand>
        <name>a 2'-deoxyribonucleoside 5'-triphosphate</name>
        <dbReference type="ChEBI" id="CHEBI:61560"/>
    </ligand>
</feature>
<feature type="binding site" evidence="3">
    <location>
        <position position="343"/>
    </location>
    <ligand>
        <name>Mg(2+)</name>
        <dbReference type="ChEBI" id="CHEBI:18420"/>
    </ligand>
</feature>
<feature type="binding site" evidence="3">
    <location>
        <position position="345"/>
    </location>
    <ligand>
        <name>Mg(2+)</name>
        <dbReference type="ChEBI" id="CHEBI:18420"/>
    </ligand>
</feature>
<feature type="binding site" evidence="3">
    <location>
        <position position="435"/>
    </location>
    <ligand>
        <name>Mg(2+)</name>
        <dbReference type="ChEBI" id="CHEBI:18420"/>
    </ligand>
</feature>
<feature type="binding site" evidence="3">
    <location>
        <begin position="450"/>
        <end position="451"/>
    </location>
    <ligand>
        <name>a 2'-deoxyribonucleoside 5'-triphosphate</name>
        <dbReference type="ChEBI" id="CHEBI:61560"/>
    </ligand>
</feature>
<feature type="modified residue" description="Phosphoserine" evidence="3">
    <location>
        <position position="134"/>
    </location>
</feature>
<organism>
    <name type="scientific">Eulemur macaco</name>
    <name type="common">Black lemur</name>
    <name type="synonym">Petterus macaco</name>
    <dbReference type="NCBI Taxonomy" id="30602"/>
    <lineage>
        <taxon>Eukaryota</taxon>
        <taxon>Metazoa</taxon>
        <taxon>Chordata</taxon>
        <taxon>Craniata</taxon>
        <taxon>Vertebrata</taxon>
        <taxon>Euteleostomi</taxon>
        <taxon>Mammalia</taxon>
        <taxon>Eutheria</taxon>
        <taxon>Euarchontoglires</taxon>
        <taxon>Primates</taxon>
        <taxon>Strepsirrhini</taxon>
        <taxon>Lemuriformes</taxon>
        <taxon>Lemuridae</taxon>
        <taxon>Eulemur</taxon>
    </lineage>
</organism>
<evidence type="ECO:0000250" key="1">
    <source>
        <dbReference type="UniProtKB" id="P04053"/>
    </source>
</evidence>
<evidence type="ECO:0000250" key="2">
    <source>
        <dbReference type="UniProtKB" id="P06526"/>
    </source>
</evidence>
<evidence type="ECO:0000250" key="3">
    <source>
        <dbReference type="UniProtKB" id="P09838"/>
    </source>
</evidence>
<evidence type="ECO:0000255" key="4">
    <source>
        <dbReference type="PROSITE-ProRule" id="PRU00033"/>
    </source>
</evidence>
<evidence type="ECO:0000256" key="5">
    <source>
        <dbReference type="SAM" id="MobiDB-lite"/>
    </source>
</evidence>
<evidence type="ECO:0000305" key="6"/>
<protein>
    <recommendedName>
        <fullName>DNA nucleotidylexotransferase</fullName>
        <ecNumber>2.7.7.31</ecNumber>
    </recommendedName>
    <alternativeName>
        <fullName>Terminal addition enzyme</fullName>
    </alternativeName>
    <alternativeName>
        <fullName>Terminal deoxynucleotidyltransferase</fullName>
        <shortName>Terminal transferase</shortName>
    </alternativeName>
</protein>
<keyword id="KW-0460">Magnesium</keyword>
<keyword id="KW-0479">Metal-binding</keyword>
<keyword id="KW-0548">Nucleotidyltransferase</keyword>
<keyword id="KW-0539">Nucleus</keyword>
<keyword id="KW-0597">Phosphoprotein</keyword>
<keyword id="KW-0780">Terminal addition</keyword>
<keyword id="KW-0808">Transferase</keyword>
<gene>
    <name type="primary">DNTT</name>
</gene>